<proteinExistence type="evidence at protein level"/>
<feature type="chain" id="PRO_0000397955" description="Heat shock protein 81">
    <location>
        <begin position="1" status="less than"/>
        <end position="28" status="greater than"/>
    </location>
</feature>
<feature type="binding site" evidence="1">
    <location>
        <position position="5"/>
    </location>
    <ligand>
        <name>ATP</name>
        <dbReference type="ChEBI" id="CHEBI:30616"/>
    </ligand>
</feature>
<feature type="binding site" evidence="1">
    <location>
        <position position="21"/>
    </location>
    <ligand>
        <name>ATP</name>
        <dbReference type="ChEBI" id="CHEBI:30616"/>
    </ligand>
</feature>
<feature type="non-consecutive residues" evidence="4">
    <location>
        <begin position="12"/>
        <end position="13"/>
    </location>
</feature>
<feature type="non-terminal residue" evidence="4">
    <location>
        <position position="1"/>
    </location>
</feature>
<feature type="non-terminal residue" evidence="4">
    <location>
        <position position="28"/>
    </location>
</feature>
<accession>P85932</accession>
<comment type="function">
    <text evidence="1">Putative molecular chaperone that may promote the maturation, structural maintenance and proper regulation of specific target proteins.</text>
</comment>
<comment type="subunit">
    <text evidence="1">Homodimer.</text>
</comment>
<comment type="subcellular location">
    <subcellularLocation>
        <location evidence="5">Cytoplasm</location>
    </subcellularLocation>
</comment>
<comment type="similarity">
    <text evidence="3">Belongs to the heat shock protein 90 family.</text>
</comment>
<dbReference type="SMR" id="P85932"/>
<dbReference type="GO" id="GO:0005737">
    <property type="term" value="C:cytoplasm"/>
    <property type="evidence" value="ECO:0007669"/>
    <property type="project" value="UniProtKB-SubCell"/>
</dbReference>
<dbReference type="GO" id="GO:0005524">
    <property type="term" value="F:ATP binding"/>
    <property type="evidence" value="ECO:0007669"/>
    <property type="project" value="UniProtKB-KW"/>
</dbReference>
<dbReference type="Gene3D" id="3.30.565.10">
    <property type="entry name" value="Histidine kinase-like ATPase, C-terminal domain"/>
    <property type="match status" value="1"/>
</dbReference>
<dbReference type="InterPro" id="IPR036890">
    <property type="entry name" value="HATPase_C_sf"/>
</dbReference>
<dbReference type="SUPFAM" id="SSF55874">
    <property type="entry name" value="ATPase domain of HSP90 chaperone/DNA topoisomerase II/histidine kinase"/>
    <property type="match status" value="1"/>
</dbReference>
<reference evidence="5" key="1">
    <citation type="journal article" date="2008" name="J. Proteomics">
        <title>A proteomics approach to identify proteins differentially expressed in Douglas-fir seedlings infected by Phellinus sulphurascens.</title>
        <authorList>
            <person name="Islam M.A."/>
            <person name="Sturrock R.N."/>
            <person name="Ekramoddoullah A.K.M."/>
        </authorList>
    </citation>
    <scope>IDENTIFICATION BY MASS SPECTROMETRY</scope>
</reference>
<name>HSP81_PSEMZ</name>
<protein>
    <recommendedName>
        <fullName evidence="2">Heat shock protein 81</fullName>
        <shortName evidence="2">HSP81</shortName>
    </recommendedName>
</protein>
<organism>
    <name type="scientific">Pseudotsuga menziesii</name>
    <name type="common">Douglas-fir</name>
    <name type="synonym">Abies menziesii</name>
    <dbReference type="NCBI Taxonomy" id="3357"/>
    <lineage>
        <taxon>Eukaryota</taxon>
        <taxon>Viridiplantae</taxon>
        <taxon>Streptophyta</taxon>
        <taxon>Embryophyta</taxon>
        <taxon>Tracheophyta</taxon>
        <taxon>Spermatophyta</taxon>
        <taxon>Pinopsida</taxon>
        <taxon>Pinidae</taxon>
        <taxon>Conifers I</taxon>
        <taxon>Pinales</taxon>
        <taxon>Pinaceae</taxon>
        <taxon>Pseudotsuga</taxon>
    </lineage>
</organism>
<evidence type="ECO:0000250" key="1"/>
<evidence type="ECO:0000250" key="2">
    <source>
        <dbReference type="UniProtKB" id="A2YWQ1"/>
    </source>
</evidence>
<evidence type="ECO:0000255" key="3"/>
<evidence type="ECO:0000303" key="4">
    <source>
    </source>
</evidence>
<evidence type="ECO:0000305" key="5"/>
<keyword id="KW-0067">ATP-binding</keyword>
<keyword id="KW-0143">Chaperone</keyword>
<keyword id="KW-0963">Cytoplasm</keyword>
<keyword id="KW-0547">Nucleotide-binding</keyword>
<keyword id="KW-0346">Stress response</keyword>
<sequence>ELISNSSDALDKTNNSLTIIDSGIGMTK</sequence>